<gene>
    <name evidence="4" type="primary">PBL28</name>
    <name evidence="6" type="ordered locus">At1g24030</name>
    <name evidence="7" type="ORF">T23E23.18</name>
</gene>
<keyword id="KW-0025">Alternative splicing</keyword>
<keyword id="KW-0067">ATP-binding</keyword>
<keyword id="KW-1003">Cell membrane</keyword>
<keyword id="KW-0418">Kinase</keyword>
<keyword id="KW-0472">Membrane</keyword>
<keyword id="KW-0547">Nucleotide-binding</keyword>
<keyword id="KW-0597">Phosphoprotein</keyword>
<keyword id="KW-0611">Plant defense</keyword>
<keyword id="KW-1185">Reference proteome</keyword>
<keyword id="KW-0723">Serine/threonine-protein kinase</keyword>
<keyword id="KW-0808">Transferase</keyword>
<sequence>MHFPLVSAWNKRRRSKSYDTDPCTFLFSIIFARWHKRVYRTAECWQIEDQASQPRKRRFGSSVYTLKEMEEATSSFSDENLLGKGGFGRVYQGTLKTGEVVAIKKMDLPTFKKADGEREFRVEVDILSRLDHPNLVSLIGYCADGKHRFLVYEYMQNGNLQDHLNGIKEAKISWPIRLRIALGAAKGLAYLHSSSSVGIPIVHRDFKSTNVLLDSNYNAKISDFGLAKLMPEGKDTCVTARVLGTFGYFDPEYTSTGKLTLQSDIYAFGVVLLELLTGRRAVDLTQGPNEQNLVLQVRNILNDRKKLRKVIDVELPRNSYSMEAITMFADLASRCIRIESKERPSVMDCVKELQLIIYTNSKGGLGGTIPTFRRL</sequence>
<comment type="function">
    <text evidence="1">May be involved in plant defense signaling.</text>
</comment>
<comment type="catalytic activity">
    <reaction evidence="5">
        <text>L-seryl-[protein] + ATP = O-phospho-L-seryl-[protein] + ADP + H(+)</text>
        <dbReference type="Rhea" id="RHEA:17989"/>
        <dbReference type="Rhea" id="RHEA-COMP:9863"/>
        <dbReference type="Rhea" id="RHEA-COMP:11604"/>
        <dbReference type="ChEBI" id="CHEBI:15378"/>
        <dbReference type="ChEBI" id="CHEBI:29999"/>
        <dbReference type="ChEBI" id="CHEBI:30616"/>
        <dbReference type="ChEBI" id="CHEBI:83421"/>
        <dbReference type="ChEBI" id="CHEBI:456216"/>
        <dbReference type="EC" id="2.7.11.1"/>
    </reaction>
</comment>
<comment type="catalytic activity">
    <reaction evidence="5">
        <text>L-threonyl-[protein] + ATP = O-phospho-L-threonyl-[protein] + ADP + H(+)</text>
        <dbReference type="Rhea" id="RHEA:46608"/>
        <dbReference type="Rhea" id="RHEA-COMP:11060"/>
        <dbReference type="Rhea" id="RHEA-COMP:11605"/>
        <dbReference type="ChEBI" id="CHEBI:15378"/>
        <dbReference type="ChEBI" id="CHEBI:30013"/>
        <dbReference type="ChEBI" id="CHEBI:30616"/>
        <dbReference type="ChEBI" id="CHEBI:61977"/>
        <dbReference type="ChEBI" id="CHEBI:456216"/>
        <dbReference type="EC" id="2.7.11.1"/>
    </reaction>
</comment>
<comment type="subcellular location">
    <subcellularLocation>
        <location evidence="2">Cell membrane</location>
    </subcellularLocation>
</comment>
<comment type="alternative products">
    <event type="alternative splicing"/>
    <isoform>
        <id>Q84M95-1</id>
        <name>1</name>
        <sequence type="displayed"/>
    </isoform>
    <text evidence="5">A number of isoforms are produced. According to EST sequences.</text>
</comment>
<comment type="similarity">
    <text evidence="3">Belongs to the protein kinase superfamily. Ser/Thr protein kinase family.</text>
</comment>
<comment type="sequence caution" evidence="5">
    <conflict type="erroneous gene model prediction">
        <sequence resource="EMBL-CDS" id="AAF87144"/>
    </conflict>
</comment>
<organism>
    <name type="scientific">Arabidopsis thaliana</name>
    <name type="common">Mouse-ear cress</name>
    <dbReference type="NCBI Taxonomy" id="3702"/>
    <lineage>
        <taxon>Eukaryota</taxon>
        <taxon>Viridiplantae</taxon>
        <taxon>Streptophyta</taxon>
        <taxon>Embryophyta</taxon>
        <taxon>Tracheophyta</taxon>
        <taxon>Spermatophyta</taxon>
        <taxon>Magnoliopsida</taxon>
        <taxon>eudicotyledons</taxon>
        <taxon>Gunneridae</taxon>
        <taxon>Pentapetalae</taxon>
        <taxon>rosids</taxon>
        <taxon>malvids</taxon>
        <taxon>Brassicales</taxon>
        <taxon>Brassicaceae</taxon>
        <taxon>Camelineae</taxon>
        <taxon>Arabidopsis</taxon>
    </lineage>
</organism>
<dbReference type="EC" id="2.7.11.1" evidence="5"/>
<dbReference type="EMBL" id="AC002423">
    <property type="protein sequence ID" value="AAF87144.1"/>
    <property type="status" value="ALT_SEQ"/>
    <property type="molecule type" value="Genomic_DNA"/>
</dbReference>
<dbReference type="EMBL" id="CP002684">
    <property type="protein sequence ID" value="AEE30468.1"/>
    <property type="molecule type" value="Genomic_DNA"/>
</dbReference>
<dbReference type="EMBL" id="BT006463">
    <property type="protein sequence ID" value="AAP21271.1"/>
    <property type="molecule type" value="mRNA"/>
</dbReference>
<dbReference type="EMBL" id="AK227458">
    <property type="protein sequence ID" value="BAE99461.1"/>
    <property type="molecule type" value="mRNA"/>
</dbReference>
<dbReference type="PIR" id="A86374">
    <property type="entry name" value="A86374"/>
</dbReference>
<dbReference type="RefSeq" id="NP_001320422.1">
    <property type="nucleotide sequence ID" value="NM_001332631.1"/>
</dbReference>
<dbReference type="RefSeq" id="NP_173814.2">
    <molecule id="Q84M95-1"/>
    <property type="nucleotide sequence ID" value="NM_102250.5"/>
</dbReference>
<dbReference type="SMR" id="Q84M95"/>
<dbReference type="FunCoup" id="Q84M95">
    <property type="interactions" value="367"/>
</dbReference>
<dbReference type="STRING" id="3702.Q84M95"/>
<dbReference type="PaxDb" id="3702-AT1G24030.1"/>
<dbReference type="EnsemblPlants" id="AT1G24030.1">
    <molecule id="Q84M95-1"/>
    <property type="protein sequence ID" value="AT1G24030.1"/>
    <property type="gene ID" value="AT1G24030"/>
</dbReference>
<dbReference type="GeneID" id="839015"/>
<dbReference type="Gramene" id="AT1G24030.1">
    <molecule id="Q84M95-1"/>
    <property type="protein sequence ID" value="AT1G24030.1"/>
    <property type="gene ID" value="AT1G24030"/>
</dbReference>
<dbReference type="KEGG" id="ath:AT1G24030"/>
<dbReference type="Araport" id="AT1G24030"/>
<dbReference type="TAIR" id="AT1G24030">
    <property type="gene designation" value="PBL28"/>
</dbReference>
<dbReference type="eggNOG" id="KOG1187">
    <property type="taxonomic scope" value="Eukaryota"/>
</dbReference>
<dbReference type="InParanoid" id="Q84M95"/>
<dbReference type="OrthoDB" id="4062651at2759"/>
<dbReference type="PhylomeDB" id="Q84M95"/>
<dbReference type="PRO" id="PR:Q84M95"/>
<dbReference type="Proteomes" id="UP000006548">
    <property type="component" value="Chromosome 1"/>
</dbReference>
<dbReference type="ExpressionAtlas" id="Q84M95">
    <property type="expression patterns" value="baseline and differential"/>
</dbReference>
<dbReference type="GO" id="GO:0005886">
    <property type="term" value="C:plasma membrane"/>
    <property type="evidence" value="ECO:0007669"/>
    <property type="project" value="UniProtKB-SubCell"/>
</dbReference>
<dbReference type="GO" id="GO:0005524">
    <property type="term" value="F:ATP binding"/>
    <property type="evidence" value="ECO:0007669"/>
    <property type="project" value="UniProtKB-KW"/>
</dbReference>
<dbReference type="GO" id="GO:0106310">
    <property type="term" value="F:protein serine kinase activity"/>
    <property type="evidence" value="ECO:0007669"/>
    <property type="project" value="RHEA"/>
</dbReference>
<dbReference type="GO" id="GO:0004674">
    <property type="term" value="F:protein serine/threonine kinase activity"/>
    <property type="evidence" value="ECO:0007669"/>
    <property type="project" value="UniProtKB-KW"/>
</dbReference>
<dbReference type="GO" id="GO:0000976">
    <property type="term" value="F:transcription cis-regulatory region binding"/>
    <property type="evidence" value="ECO:0000353"/>
    <property type="project" value="TAIR"/>
</dbReference>
<dbReference type="GO" id="GO:0006952">
    <property type="term" value="P:defense response"/>
    <property type="evidence" value="ECO:0007669"/>
    <property type="project" value="UniProtKB-KW"/>
</dbReference>
<dbReference type="CDD" id="cd14066">
    <property type="entry name" value="STKc_IRAK"/>
    <property type="match status" value="1"/>
</dbReference>
<dbReference type="FunFam" id="1.10.510.10:FF:000395">
    <property type="entry name" value="receptor-like serine/threonine-protein kinase NCRK"/>
    <property type="match status" value="1"/>
</dbReference>
<dbReference type="FunFam" id="3.30.200.20:FF:000178">
    <property type="entry name" value="serine/threonine-protein kinase PBS1-like"/>
    <property type="match status" value="1"/>
</dbReference>
<dbReference type="Gene3D" id="3.30.200.20">
    <property type="entry name" value="Phosphorylase Kinase, domain 1"/>
    <property type="match status" value="1"/>
</dbReference>
<dbReference type="Gene3D" id="1.10.510.10">
    <property type="entry name" value="Transferase(Phosphotransferase) domain 1"/>
    <property type="match status" value="1"/>
</dbReference>
<dbReference type="InterPro" id="IPR011009">
    <property type="entry name" value="Kinase-like_dom_sf"/>
</dbReference>
<dbReference type="InterPro" id="IPR000719">
    <property type="entry name" value="Prot_kinase_dom"/>
</dbReference>
<dbReference type="InterPro" id="IPR017441">
    <property type="entry name" value="Protein_kinase_ATP_BS"/>
</dbReference>
<dbReference type="InterPro" id="IPR008271">
    <property type="entry name" value="Ser/Thr_kinase_AS"/>
</dbReference>
<dbReference type="PANTHER" id="PTHR47989">
    <property type="entry name" value="OS01G0750732 PROTEIN"/>
    <property type="match status" value="1"/>
</dbReference>
<dbReference type="PANTHER" id="PTHR47989:SF47">
    <property type="entry name" value="SERINE_THREONINE-PROTEIN KINASE PBL28-RELATED"/>
    <property type="match status" value="1"/>
</dbReference>
<dbReference type="Pfam" id="PF00069">
    <property type="entry name" value="Pkinase"/>
    <property type="match status" value="1"/>
</dbReference>
<dbReference type="SUPFAM" id="SSF56112">
    <property type="entry name" value="Protein kinase-like (PK-like)"/>
    <property type="match status" value="1"/>
</dbReference>
<dbReference type="PROSITE" id="PS00107">
    <property type="entry name" value="PROTEIN_KINASE_ATP"/>
    <property type="match status" value="1"/>
</dbReference>
<dbReference type="PROSITE" id="PS50011">
    <property type="entry name" value="PROTEIN_KINASE_DOM"/>
    <property type="match status" value="1"/>
</dbReference>
<dbReference type="PROSITE" id="PS00108">
    <property type="entry name" value="PROTEIN_KINASE_ST"/>
    <property type="match status" value="1"/>
</dbReference>
<feature type="chain" id="PRO_0000438619" description="Probable serine/threonine-protein kinase PBL28">
    <location>
        <begin position="1"/>
        <end position="375"/>
    </location>
</feature>
<feature type="domain" description="Protein kinase" evidence="3">
    <location>
        <begin position="76"/>
        <end position="356"/>
    </location>
</feature>
<feature type="active site" description="Proton acceptor" evidence="3">
    <location>
        <position position="205"/>
    </location>
</feature>
<feature type="binding site" evidence="3">
    <location>
        <begin position="82"/>
        <end position="90"/>
    </location>
    <ligand>
        <name>ATP</name>
        <dbReference type="ChEBI" id="CHEBI:30616"/>
    </ligand>
</feature>
<feature type="binding site" evidence="3">
    <location>
        <position position="104"/>
    </location>
    <ligand>
        <name>ATP</name>
        <dbReference type="ChEBI" id="CHEBI:30616"/>
    </ligand>
</feature>
<feature type="modified residue" description="Phosphothreonine" evidence="1">
    <location>
        <position position="65"/>
    </location>
</feature>
<feature type="modified residue" description="Phosphotyrosine" evidence="1">
    <location>
        <position position="152"/>
    </location>
</feature>
<feature type="modified residue" description="Phosphothreonine" evidence="1">
    <location>
        <position position="245"/>
    </location>
</feature>
<feature type="modified residue" description="Phosphotyrosine" evidence="1">
    <location>
        <position position="253"/>
    </location>
</feature>
<proteinExistence type="evidence at transcript level"/>
<name>PBL28_ARATH</name>
<protein>
    <recommendedName>
        <fullName evidence="5">Probable serine/threonine-protein kinase PBL28</fullName>
        <ecNumber evidence="5">2.7.11.1</ecNumber>
    </recommendedName>
    <alternativeName>
        <fullName evidence="4">PBS1-like protein 28</fullName>
    </alternativeName>
</protein>
<reference key="1">
    <citation type="journal article" date="2000" name="Nature">
        <title>Sequence and analysis of chromosome 1 of the plant Arabidopsis thaliana.</title>
        <authorList>
            <person name="Theologis A."/>
            <person name="Ecker J.R."/>
            <person name="Palm C.J."/>
            <person name="Federspiel N.A."/>
            <person name="Kaul S."/>
            <person name="White O."/>
            <person name="Alonso J."/>
            <person name="Altafi H."/>
            <person name="Araujo R."/>
            <person name="Bowman C.L."/>
            <person name="Brooks S.Y."/>
            <person name="Buehler E."/>
            <person name="Chan A."/>
            <person name="Chao Q."/>
            <person name="Chen H."/>
            <person name="Cheuk R.F."/>
            <person name="Chin C.W."/>
            <person name="Chung M.K."/>
            <person name="Conn L."/>
            <person name="Conway A.B."/>
            <person name="Conway A.R."/>
            <person name="Creasy T.H."/>
            <person name="Dewar K."/>
            <person name="Dunn P."/>
            <person name="Etgu P."/>
            <person name="Feldblyum T.V."/>
            <person name="Feng J.-D."/>
            <person name="Fong B."/>
            <person name="Fujii C.Y."/>
            <person name="Gill J.E."/>
            <person name="Goldsmith A.D."/>
            <person name="Haas B."/>
            <person name="Hansen N.F."/>
            <person name="Hughes B."/>
            <person name="Huizar L."/>
            <person name="Hunter J.L."/>
            <person name="Jenkins J."/>
            <person name="Johnson-Hopson C."/>
            <person name="Khan S."/>
            <person name="Khaykin E."/>
            <person name="Kim C.J."/>
            <person name="Koo H.L."/>
            <person name="Kremenetskaia I."/>
            <person name="Kurtz D.B."/>
            <person name="Kwan A."/>
            <person name="Lam B."/>
            <person name="Langin-Hooper S."/>
            <person name="Lee A."/>
            <person name="Lee J.M."/>
            <person name="Lenz C.A."/>
            <person name="Li J.H."/>
            <person name="Li Y.-P."/>
            <person name="Lin X."/>
            <person name="Liu S.X."/>
            <person name="Liu Z.A."/>
            <person name="Luros J.S."/>
            <person name="Maiti R."/>
            <person name="Marziali A."/>
            <person name="Militscher J."/>
            <person name="Miranda M."/>
            <person name="Nguyen M."/>
            <person name="Nierman W.C."/>
            <person name="Osborne B.I."/>
            <person name="Pai G."/>
            <person name="Peterson J."/>
            <person name="Pham P.K."/>
            <person name="Rizzo M."/>
            <person name="Rooney T."/>
            <person name="Rowley D."/>
            <person name="Sakano H."/>
            <person name="Salzberg S.L."/>
            <person name="Schwartz J.R."/>
            <person name="Shinn P."/>
            <person name="Southwick A.M."/>
            <person name="Sun H."/>
            <person name="Tallon L.J."/>
            <person name="Tambunga G."/>
            <person name="Toriumi M.J."/>
            <person name="Town C.D."/>
            <person name="Utterback T."/>
            <person name="Van Aken S."/>
            <person name="Vaysberg M."/>
            <person name="Vysotskaia V.S."/>
            <person name="Walker M."/>
            <person name="Wu D."/>
            <person name="Yu G."/>
            <person name="Fraser C.M."/>
            <person name="Venter J.C."/>
            <person name="Davis R.W."/>
        </authorList>
    </citation>
    <scope>NUCLEOTIDE SEQUENCE [LARGE SCALE GENOMIC DNA]</scope>
    <source>
        <strain>cv. Columbia</strain>
    </source>
</reference>
<reference key="2">
    <citation type="journal article" date="2017" name="Plant J.">
        <title>Araport11: a complete reannotation of the Arabidopsis thaliana reference genome.</title>
        <authorList>
            <person name="Cheng C.Y."/>
            <person name="Krishnakumar V."/>
            <person name="Chan A.P."/>
            <person name="Thibaud-Nissen F."/>
            <person name="Schobel S."/>
            <person name="Town C.D."/>
        </authorList>
    </citation>
    <scope>GENOME REANNOTATION</scope>
    <source>
        <strain>cv. Columbia</strain>
    </source>
</reference>
<reference key="3">
    <citation type="journal article" date="2003" name="Science">
        <title>Empirical analysis of transcriptional activity in the Arabidopsis genome.</title>
        <authorList>
            <person name="Yamada K."/>
            <person name="Lim J."/>
            <person name="Dale J.M."/>
            <person name="Chen H."/>
            <person name="Shinn P."/>
            <person name="Palm C.J."/>
            <person name="Southwick A.M."/>
            <person name="Wu H.C."/>
            <person name="Kim C.J."/>
            <person name="Nguyen M."/>
            <person name="Pham P.K."/>
            <person name="Cheuk R.F."/>
            <person name="Karlin-Newmann G."/>
            <person name="Liu S.X."/>
            <person name="Lam B."/>
            <person name="Sakano H."/>
            <person name="Wu T."/>
            <person name="Yu G."/>
            <person name="Miranda M."/>
            <person name="Quach H.L."/>
            <person name="Tripp M."/>
            <person name="Chang C.H."/>
            <person name="Lee J.M."/>
            <person name="Toriumi M.J."/>
            <person name="Chan M.M."/>
            <person name="Tang C.C."/>
            <person name="Onodera C.S."/>
            <person name="Deng J.M."/>
            <person name="Akiyama K."/>
            <person name="Ansari Y."/>
            <person name="Arakawa T."/>
            <person name="Banh J."/>
            <person name="Banno F."/>
            <person name="Bowser L."/>
            <person name="Brooks S.Y."/>
            <person name="Carninci P."/>
            <person name="Chao Q."/>
            <person name="Choy N."/>
            <person name="Enju A."/>
            <person name="Goldsmith A.D."/>
            <person name="Gurjal M."/>
            <person name="Hansen N.F."/>
            <person name="Hayashizaki Y."/>
            <person name="Johnson-Hopson C."/>
            <person name="Hsuan V.W."/>
            <person name="Iida K."/>
            <person name="Karnes M."/>
            <person name="Khan S."/>
            <person name="Koesema E."/>
            <person name="Ishida J."/>
            <person name="Jiang P.X."/>
            <person name="Jones T."/>
            <person name="Kawai J."/>
            <person name="Kamiya A."/>
            <person name="Meyers C."/>
            <person name="Nakajima M."/>
            <person name="Narusaka M."/>
            <person name="Seki M."/>
            <person name="Sakurai T."/>
            <person name="Satou M."/>
            <person name="Tamse R."/>
            <person name="Vaysberg M."/>
            <person name="Wallender E.K."/>
            <person name="Wong C."/>
            <person name="Yamamura Y."/>
            <person name="Yuan S."/>
            <person name="Shinozaki K."/>
            <person name="Davis R.W."/>
            <person name="Theologis A."/>
            <person name="Ecker J.R."/>
        </authorList>
    </citation>
    <scope>NUCLEOTIDE SEQUENCE [LARGE SCALE MRNA]</scope>
    <source>
        <strain>cv. Columbia</strain>
    </source>
</reference>
<reference key="4">
    <citation type="submission" date="2006-07" db="EMBL/GenBank/DDBJ databases">
        <title>Large-scale analysis of RIKEN Arabidopsis full-length (RAFL) cDNAs.</title>
        <authorList>
            <person name="Totoki Y."/>
            <person name="Seki M."/>
            <person name="Ishida J."/>
            <person name="Nakajima M."/>
            <person name="Enju A."/>
            <person name="Kamiya A."/>
            <person name="Narusaka M."/>
            <person name="Shin-i T."/>
            <person name="Nakagawa M."/>
            <person name="Sakamoto N."/>
            <person name="Oishi K."/>
            <person name="Kohara Y."/>
            <person name="Kobayashi M."/>
            <person name="Toyoda A."/>
            <person name="Sakaki Y."/>
            <person name="Sakurai T."/>
            <person name="Iida K."/>
            <person name="Akiyama K."/>
            <person name="Satou M."/>
            <person name="Toyoda T."/>
            <person name="Konagaya A."/>
            <person name="Carninci P."/>
            <person name="Kawai J."/>
            <person name="Hayashizaki Y."/>
            <person name="Shinozaki K."/>
        </authorList>
    </citation>
    <scope>NUCLEOTIDE SEQUENCE [LARGE SCALE MRNA]</scope>
    <source>
        <strain>cv. Columbia</strain>
    </source>
</reference>
<reference key="5">
    <citation type="journal article" date="2010" name="Cell Host Microbe">
        <title>Receptor-like cytoplasmic kinases integrate signaling from multiple plant immune receptors and are targeted by a Pseudomonas syringae effector.</title>
        <authorList>
            <person name="Zhang J."/>
            <person name="Li W."/>
            <person name="Xiang T."/>
            <person name="Liu Z."/>
            <person name="Laluk K."/>
            <person name="Ding X."/>
            <person name="Zou Y."/>
            <person name="Gao M."/>
            <person name="Zhang X."/>
            <person name="Chen S."/>
            <person name="Mengiste T."/>
            <person name="Zhang Y."/>
            <person name="Zhou J.M."/>
        </authorList>
    </citation>
    <scope>GENE FAMILY</scope>
    <scope>NOMENCLATURE</scope>
</reference>
<evidence type="ECO:0000250" key="1">
    <source>
        <dbReference type="UniProtKB" id="O48814"/>
    </source>
</evidence>
<evidence type="ECO:0000250" key="2">
    <source>
        <dbReference type="UniProtKB" id="Q9ZUF4"/>
    </source>
</evidence>
<evidence type="ECO:0000255" key="3">
    <source>
        <dbReference type="PROSITE-ProRule" id="PRU00159"/>
    </source>
</evidence>
<evidence type="ECO:0000303" key="4">
    <source>
    </source>
</evidence>
<evidence type="ECO:0000305" key="5"/>
<evidence type="ECO:0000312" key="6">
    <source>
        <dbReference type="Araport" id="AT1G24030"/>
    </source>
</evidence>
<evidence type="ECO:0000312" key="7">
    <source>
        <dbReference type="EMBL" id="AAF87144.1"/>
    </source>
</evidence>
<accession>Q84M95</accession>
<accession>Q9LR92</accession>